<evidence type="ECO:0000255" key="1"/>
<evidence type="ECO:0000269" key="2">
    <source>
    </source>
</evidence>
<evidence type="ECO:0000269" key="3">
    <source>
    </source>
</evidence>
<evidence type="ECO:0000305" key="4"/>
<accession>P40975</accession>
<accession>D3DLN2</accession>
<name>PMP2_YEAST</name>
<feature type="propeptide" id="PRO_0000022073" evidence="3">
    <location>
        <begin position="1"/>
        <end position="5"/>
    </location>
</feature>
<feature type="chain" id="PRO_0000022074" description="Plasma membrane ATPase proteolipid 2">
    <location>
        <begin position="6"/>
        <end position="43"/>
    </location>
</feature>
<feature type="transmembrane region" description="Helical" evidence="1">
    <location>
        <begin position="9"/>
        <end position="29"/>
    </location>
</feature>
<feature type="topological domain" description="Cytoplasmic" evidence="1">
    <location>
        <begin position="30"/>
        <end position="43"/>
    </location>
</feature>
<proteinExistence type="evidence at protein level"/>
<protein>
    <recommendedName>
        <fullName>Plasma membrane ATPase proteolipid 2</fullName>
    </recommendedName>
</protein>
<comment type="subunit">
    <text>Monomer and homodimer. Associated with the 100 kDa subunit of the plasma membrane H(+)-ATPase.</text>
</comment>
<comment type="subcellular location">
    <subcellularLocation>
        <location>Cell membrane</location>
    </subcellularLocation>
</comment>
<comment type="miscellaneous">
    <text evidence="2">Present with 74700 molecules/cell in log phase SD medium.</text>
</comment>
<comment type="caution">
    <text evidence="4">It is uncertain whether Met-1 or Met-3 is the initiator.</text>
</comment>
<reference key="1">
    <citation type="journal article" date="1994" name="J. Biol. Chem.">
        <title>Two distinct genes encode small isoproteolipids affecting plasma membrane H(+)-ATPase activity of Saccharomyces cerevisiae.</title>
        <authorList>
            <person name="Navarre C."/>
            <person name="Catty P."/>
            <person name="Leterme S."/>
            <person name="Dietrich F.S."/>
            <person name="Goffeau A."/>
        </authorList>
    </citation>
    <scope>NUCLEOTIDE SEQUENCE [GENOMIC DNA]</scope>
    <scope>PROTEIN SEQUENCE OF 6-43</scope>
    <source>
        <strain>ATCC 201238 / W303-1B</strain>
    </source>
</reference>
<reference key="2">
    <citation type="journal article" date="1997" name="Nature">
        <title>The nucleotide sequence of Saccharomyces cerevisiae chromosome V.</title>
        <authorList>
            <person name="Dietrich F.S."/>
            <person name="Mulligan J.T."/>
            <person name="Hennessy K.M."/>
            <person name="Yelton M.A."/>
            <person name="Allen E."/>
            <person name="Araujo R."/>
            <person name="Aviles E."/>
            <person name="Berno A."/>
            <person name="Brennan T."/>
            <person name="Carpenter J."/>
            <person name="Chen E."/>
            <person name="Cherry J.M."/>
            <person name="Chung E."/>
            <person name="Duncan M."/>
            <person name="Guzman E."/>
            <person name="Hartzell G."/>
            <person name="Hunicke-Smith S."/>
            <person name="Hyman R.W."/>
            <person name="Kayser A."/>
            <person name="Komp C."/>
            <person name="Lashkari D."/>
            <person name="Lew H."/>
            <person name="Lin D."/>
            <person name="Mosedale D."/>
            <person name="Nakahara K."/>
            <person name="Namath A."/>
            <person name="Norgren R."/>
            <person name="Oefner P."/>
            <person name="Oh C."/>
            <person name="Petel F.X."/>
            <person name="Roberts D."/>
            <person name="Sehl P."/>
            <person name="Schramm S."/>
            <person name="Shogren T."/>
            <person name="Smith V."/>
            <person name="Taylor P."/>
            <person name="Wei Y."/>
            <person name="Botstein D."/>
            <person name="Davis R.W."/>
        </authorList>
    </citation>
    <scope>NUCLEOTIDE SEQUENCE [LARGE SCALE GENOMIC DNA]</scope>
    <source>
        <strain>ATCC 204508 / S288c</strain>
    </source>
</reference>
<reference key="3">
    <citation type="journal article" date="2014" name="G3 (Bethesda)">
        <title>The reference genome sequence of Saccharomyces cerevisiae: Then and now.</title>
        <authorList>
            <person name="Engel S.R."/>
            <person name="Dietrich F.S."/>
            <person name="Fisk D.G."/>
            <person name="Binkley G."/>
            <person name="Balakrishnan R."/>
            <person name="Costanzo M.C."/>
            <person name="Dwight S.S."/>
            <person name="Hitz B.C."/>
            <person name="Karra K."/>
            <person name="Nash R.S."/>
            <person name="Weng S."/>
            <person name="Wong E.D."/>
            <person name="Lloyd P."/>
            <person name="Skrzypek M.S."/>
            <person name="Miyasato S.R."/>
            <person name="Simison M."/>
            <person name="Cherry J.M."/>
        </authorList>
    </citation>
    <scope>GENOME REANNOTATION</scope>
    <source>
        <strain>ATCC 204508 / S288c</strain>
    </source>
</reference>
<reference key="4">
    <citation type="journal article" date="2007" name="Genome Res.">
        <title>Approaching a complete repository of sequence-verified protein-encoding clones for Saccharomyces cerevisiae.</title>
        <authorList>
            <person name="Hu Y."/>
            <person name="Rolfs A."/>
            <person name="Bhullar B."/>
            <person name="Murthy T.V.S."/>
            <person name="Zhu C."/>
            <person name="Berger M.F."/>
            <person name="Camargo A.A."/>
            <person name="Kelley F."/>
            <person name="McCarron S."/>
            <person name="Jepson D."/>
            <person name="Richardson A."/>
            <person name="Raphael J."/>
            <person name="Moreira D."/>
            <person name="Taycher E."/>
            <person name="Zuo D."/>
            <person name="Mohr S."/>
            <person name="Kane M.F."/>
            <person name="Williamson J."/>
            <person name="Simpson A.J.G."/>
            <person name="Bulyk M.L."/>
            <person name="Harlow E."/>
            <person name="Marsischky G."/>
            <person name="Kolodner R.D."/>
            <person name="LaBaer J."/>
        </authorList>
    </citation>
    <scope>NUCLEOTIDE SEQUENCE [GENOMIC DNA]</scope>
    <source>
        <strain>ATCC 204508 / S288c</strain>
    </source>
</reference>
<reference key="5">
    <citation type="journal article" date="2003" name="Nature">
        <title>Global analysis of protein expression in yeast.</title>
        <authorList>
            <person name="Ghaemmaghami S."/>
            <person name="Huh W.-K."/>
            <person name="Bower K."/>
            <person name="Howson R.W."/>
            <person name="Belle A."/>
            <person name="Dephoure N."/>
            <person name="O'Shea E.K."/>
            <person name="Weissman J.S."/>
        </authorList>
    </citation>
    <scope>LEVEL OF PROTEIN EXPRESSION [LARGE SCALE ANALYSIS]</scope>
</reference>
<sequence length="43" mass="4848">MLMSTLPGGVILVFILVGLACIAIISTIIYRKWQARQRGLQRF</sequence>
<dbReference type="EMBL" id="X79370">
    <property type="protein sequence ID" value="CAA55915.1"/>
    <property type="molecule type" value="Genomic_DNA"/>
</dbReference>
<dbReference type="EMBL" id="U18530">
    <property type="protein sequence ID" value="AAB64509.1"/>
    <property type="molecule type" value="Genomic_DNA"/>
</dbReference>
<dbReference type="EMBL" id="AY692935">
    <property type="protein sequence ID" value="AAT92954.1"/>
    <property type="molecule type" value="Genomic_DNA"/>
</dbReference>
<dbReference type="EMBL" id="BK006939">
    <property type="protein sequence ID" value="DAA07636.1"/>
    <property type="molecule type" value="Genomic_DNA"/>
</dbReference>
<dbReference type="PIR" id="A53927">
    <property type="entry name" value="A53927"/>
</dbReference>
<dbReference type="RefSeq" id="NP_010898.1">
    <property type="nucleotide sequence ID" value="NM_001180029.1"/>
</dbReference>
<dbReference type="SMR" id="P40975"/>
<dbReference type="BioGRID" id="36713">
    <property type="interactions" value="53"/>
</dbReference>
<dbReference type="DIP" id="DIP-7629N"/>
<dbReference type="FunCoup" id="P40975">
    <property type="interactions" value="89"/>
</dbReference>
<dbReference type="IntAct" id="P40975">
    <property type="interactions" value="19"/>
</dbReference>
<dbReference type="MINT" id="P40975"/>
<dbReference type="STRING" id="4932.YEL017C-A"/>
<dbReference type="PaxDb" id="4932-YEL017C-A"/>
<dbReference type="TopDownProteomics" id="P40975"/>
<dbReference type="EnsemblFungi" id="YEL017C-A_mRNA">
    <property type="protein sequence ID" value="YEL017C-A"/>
    <property type="gene ID" value="YEL017C-A"/>
</dbReference>
<dbReference type="GeneID" id="856697"/>
<dbReference type="KEGG" id="sce:YEL017C-A"/>
<dbReference type="AGR" id="SGD:S000002103"/>
<dbReference type="SGD" id="S000002103">
    <property type="gene designation" value="PMP2"/>
</dbReference>
<dbReference type="VEuPathDB" id="FungiDB:YEL017C-A"/>
<dbReference type="eggNOG" id="ENOG502SFZ7">
    <property type="taxonomic scope" value="Eukaryota"/>
</dbReference>
<dbReference type="GeneTree" id="ENSGT00940000176551"/>
<dbReference type="HOGENOM" id="CLU_219858_0_0_1"/>
<dbReference type="InParanoid" id="P40975"/>
<dbReference type="OrthoDB" id="4065235at2759"/>
<dbReference type="BioCyc" id="YEAST:G3O-30347-MONOMER"/>
<dbReference type="BioGRID-ORCS" id="856697">
    <property type="hits" value="0 hits in 10 CRISPR screens"/>
</dbReference>
<dbReference type="PRO" id="PR:P40975"/>
<dbReference type="Proteomes" id="UP000002311">
    <property type="component" value="Chromosome V"/>
</dbReference>
<dbReference type="GO" id="GO:0071944">
    <property type="term" value="C:cell periphery"/>
    <property type="evidence" value="ECO:0007005"/>
    <property type="project" value="SGD"/>
</dbReference>
<dbReference type="GO" id="GO:0000329">
    <property type="term" value="C:fungal-type vacuole membrane"/>
    <property type="evidence" value="ECO:0007005"/>
    <property type="project" value="SGD"/>
</dbReference>
<dbReference type="GO" id="GO:0016020">
    <property type="term" value="C:membrane"/>
    <property type="evidence" value="ECO:0000314"/>
    <property type="project" value="SGD"/>
</dbReference>
<dbReference type="GO" id="GO:0005886">
    <property type="term" value="C:plasma membrane"/>
    <property type="evidence" value="ECO:0000316"/>
    <property type="project" value="SGD"/>
</dbReference>
<dbReference type="GO" id="GO:0030234">
    <property type="term" value="F:enzyme regulator activity"/>
    <property type="evidence" value="ECO:0000316"/>
    <property type="project" value="SGD"/>
</dbReference>
<dbReference type="InterPro" id="IPR012589">
    <property type="entry name" value="Pmp1/Pmp2"/>
</dbReference>
<dbReference type="Pfam" id="PF08114">
    <property type="entry name" value="PMP1_2"/>
    <property type="match status" value="1"/>
</dbReference>
<keyword id="KW-1003">Cell membrane</keyword>
<keyword id="KW-0903">Direct protein sequencing</keyword>
<keyword id="KW-0472">Membrane</keyword>
<keyword id="KW-1185">Reference proteome</keyword>
<keyword id="KW-0812">Transmembrane</keyword>
<keyword id="KW-1133">Transmembrane helix</keyword>
<organism>
    <name type="scientific">Saccharomyces cerevisiae (strain ATCC 204508 / S288c)</name>
    <name type="common">Baker's yeast</name>
    <dbReference type="NCBI Taxonomy" id="559292"/>
    <lineage>
        <taxon>Eukaryota</taxon>
        <taxon>Fungi</taxon>
        <taxon>Dikarya</taxon>
        <taxon>Ascomycota</taxon>
        <taxon>Saccharomycotina</taxon>
        <taxon>Saccharomycetes</taxon>
        <taxon>Saccharomycetales</taxon>
        <taxon>Saccharomycetaceae</taxon>
        <taxon>Saccharomyces</taxon>
    </lineage>
</organism>
<gene>
    <name type="primary">PMP2</name>
    <name type="ordered locus">YEL017C-A</name>
    <name type="ORF">YEL017BC</name>
</gene>